<reference key="1">
    <citation type="journal article" date="2006" name="DNA Res.">
        <title>Genome sequence of the cat pathogen, Chlamydophila felis.</title>
        <authorList>
            <person name="Azuma Y."/>
            <person name="Hirakawa H."/>
            <person name="Yamashita A."/>
            <person name="Cai Y."/>
            <person name="Rahman M.A."/>
            <person name="Suzuki H."/>
            <person name="Mitaku S."/>
            <person name="Toh H."/>
            <person name="Goto S."/>
            <person name="Murakami T."/>
            <person name="Sugi K."/>
            <person name="Hayashi H."/>
            <person name="Fukushi H."/>
            <person name="Hattori M."/>
            <person name="Kuhara S."/>
            <person name="Shirai M."/>
        </authorList>
    </citation>
    <scope>NUCLEOTIDE SEQUENCE [LARGE SCALE GENOMIC DNA]</scope>
    <source>
        <strain>Fe/C-56</strain>
    </source>
</reference>
<name>BIOD_CHLFF</name>
<proteinExistence type="inferred from homology"/>
<accession>Q255H0</accession>
<protein>
    <recommendedName>
        <fullName evidence="1">ATP-dependent dethiobiotin synthetase BioD</fullName>
        <ecNumber evidence="1">6.3.3.3</ecNumber>
    </recommendedName>
    <alternativeName>
        <fullName evidence="1">DTB synthetase</fullName>
        <shortName evidence="1">DTBS</shortName>
    </alternativeName>
    <alternativeName>
        <fullName evidence="1">Dethiobiotin synthase</fullName>
    </alternativeName>
</protein>
<gene>
    <name evidence="1" type="primary">bioD</name>
    <name type="ordered locus">CF0296</name>
</gene>
<feature type="chain" id="PRO_1000133209" description="ATP-dependent dethiobiotin synthetase BioD">
    <location>
        <begin position="1"/>
        <end position="208"/>
    </location>
</feature>
<feature type="active site" evidence="1">
    <location>
        <position position="31"/>
    </location>
</feature>
<feature type="binding site" evidence="1">
    <location>
        <begin position="11"/>
        <end position="16"/>
    </location>
    <ligand>
        <name>ATP</name>
        <dbReference type="ChEBI" id="CHEBI:30616"/>
    </ligand>
</feature>
<feature type="binding site" evidence="1">
    <location>
        <position position="15"/>
    </location>
    <ligand>
        <name>Mg(2+)</name>
        <dbReference type="ChEBI" id="CHEBI:18420"/>
    </ligand>
</feature>
<feature type="binding site" evidence="1">
    <location>
        <position position="35"/>
    </location>
    <ligand>
        <name>substrate</name>
    </ligand>
</feature>
<feature type="binding site" evidence="1">
    <location>
        <position position="42"/>
    </location>
    <ligand>
        <name>ATP</name>
        <dbReference type="ChEBI" id="CHEBI:30616"/>
    </ligand>
</feature>
<feature type="binding site" evidence="1">
    <location>
        <position position="42"/>
    </location>
    <ligand>
        <name>Mg(2+)</name>
        <dbReference type="ChEBI" id="CHEBI:18420"/>
    </ligand>
</feature>
<feature type="binding site" evidence="1">
    <location>
        <begin position="95"/>
        <end position="98"/>
    </location>
    <ligand>
        <name>ATP</name>
        <dbReference type="ChEBI" id="CHEBI:30616"/>
    </ligand>
</feature>
<feature type="binding site" evidence="1">
    <location>
        <position position="95"/>
    </location>
    <ligand>
        <name>Mg(2+)</name>
        <dbReference type="ChEBI" id="CHEBI:18420"/>
    </ligand>
</feature>
<feature type="binding site" evidence="1">
    <location>
        <begin position="155"/>
        <end position="156"/>
    </location>
    <ligand>
        <name>ATP</name>
        <dbReference type="ChEBI" id="CHEBI:30616"/>
    </ligand>
</feature>
<evidence type="ECO:0000255" key="1">
    <source>
        <dbReference type="HAMAP-Rule" id="MF_00336"/>
    </source>
</evidence>
<sequence length="208" mass="23441">MHIIIAGIDTEVGKTFVSAILATLFQAEYWKPIQSGSLDRSDSTIVRELSGAVCHRETYRLTHPLAAHQAARVDNIPIHAENFSLPVTEAPLIIETSGGFLSPCSQDSLQGDVFSKWPCQWVLVSKAYLGSINHTCLTVEAMRTRNLNILGMVLNQYPKEEEDWLLNMTGIPYLGRLNYENIISKETVKNYANLWKETWEDREAKLCS</sequence>
<organism>
    <name type="scientific">Chlamydia felis (strain Fe/C-56)</name>
    <name type="common">Chlamydophila felis</name>
    <dbReference type="NCBI Taxonomy" id="264202"/>
    <lineage>
        <taxon>Bacteria</taxon>
        <taxon>Pseudomonadati</taxon>
        <taxon>Chlamydiota</taxon>
        <taxon>Chlamydiia</taxon>
        <taxon>Chlamydiales</taxon>
        <taxon>Chlamydiaceae</taxon>
        <taxon>Chlamydia/Chlamydophila group</taxon>
        <taxon>Chlamydia</taxon>
    </lineage>
</organism>
<dbReference type="EC" id="6.3.3.3" evidence="1"/>
<dbReference type="EMBL" id="AP006861">
    <property type="protein sequence ID" value="BAE81068.1"/>
    <property type="molecule type" value="Genomic_DNA"/>
</dbReference>
<dbReference type="RefSeq" id="WP_011457849.1">
    <property type="nucleotide sequence ID" value="NC_007899.1"/>
</dbReference>
<dbReference type="SMR" id="Q255H0"/>
<dbReference type="STRING" id="264202.CF0296"/>
<dbReference type="KEGG" id="cfe:CF0296"/>
<dbReference type="eggNOG" id="COG0132">
    <property type="taxonomic scope" value="Bacteria"/>
</dbReference>
<dbReference type="HOGENOM" id="CLU_072551_2_0_0"/>
<dbReference type="OrthoDB" id="9802097at2"/>
<dbReference type="UniPathway" id="UPA00078">
    <property type="reaction ID" value="UER00161"/>
</dbReference>
<dbReference type="Proteomes" id="UP000001260">
    <property type="component" value="Chromosome"/>
</dbReference>
<dbReference type="GO" id="GO:0005829">
    <property type="term" value="C:cytosol"/>
    <property type="evidence" value="ECO:0007669"/>
    <property type="project" value="TreeGrafter"/>
</dbReference>
<dbReference type="GO" id="GO:0005524">
    <property type="term" value="F:ATP binding"/>
    <property type="evidence" value="ECO:0007669"/>
    <property type="project" value="UniProtKB-UniRule"/>
</dbReference>
<dbReference type="GO" id="GO:0004141">
    <property type="term" value="F:dethiobiotin synthase activity"/>
    <property type="evidence" value="ECO:0007669"/>
    <property type="project" value="UniProtKB-UniRule"/>
</dbReference>
<dbReference type="GO" id="GO:0000287">
    <property type="term" value="F:magnesium ion binding"/>
    <property type="evidence" value="ECO:0007669"/>
    <property type="project" value="UniProtKB-UniRule"/>
</dbReference>
<dbReference type="GO" id="GO:0009102">
    <property type="term" value="P:biotin biosynthetic process"/>
    <property type="evidence" value="ECO:0007669"/>
    <property type="project" value="UniProtKB-UniRule"/>
</dbReference>
<dbReference type="CDD" id="cd03109">
    <property type="entry name" value="DTBS"/>
    <property type="match status" value="1"/>
</dbReference>
<dbReference type="Gene3D" id="3.40.50.300">
    <property type="entry name" value="P-loop containing nucleotide triphosphate hydrolases"/>
    <property type="match status" value="1"/>
</dbReference>
<dbReference type="HAMAP" id="MF_00336">
    <property type="entry name" value="BioD"/>
    <property type="match status" value="1"/>
</dbReference>
<dbReference type="InterPro" id="IPR004472">
    <property type="entry name" value="DTB_synth_BioD"/>
</dbReference>
<dbReference type="InterPro" id="IPR027417">
    <property type="entry name" value="P-loop_NTPase"/>
</dbReference>
<dbReference type="NCBIfam" id="TIGR00347">
    <property type="entry name" value="bioD"/>
    <property type="match status" value="1"/>
</dbReference>
<dbReference type="PANTHER" id="PTHR43210:SF2">
    <property type="entry name" value="ATP-DEPENDENT DETHIOBIOTIN SYNTHETASE BIOD 2"/>
    <property type="match status" value="1"/>
</dbReference>
<dbReference type="PANTHER" id="PTHR43210">
    <property type="entry name" value="DETHIOBIOTIN SYNTHETASE"/>
    <property type="match status" value="1"/>
</dbReference>
<dbReference type="Pfam" id="PF13500">
    <property type="entry name" value="AAA_26"/>
    <property type="match status" value="1"/>
</dbReference>
<dbReference type="PIRSF" id="PIRSF006755">
    <property type="entry name" value="DTB_synth"/>
    <property type="match status" value="1"/>
</dbReference>
<dbReference type="SUPFAM" id="SSF52540">
    <property type="entry name" value="P-loop containing nucleoside triphosphate hydrolases"/>
    <property type="match status" value="1"/>
</dbReference>
<keyword id="KW-0067">ATP-binding</keyword>
<keyword id="KW-0093">Biotin biosynthesis</keyword>
<keyword id="KW-0963">Cytoplasm</keyword>
<keyword id="KW-0436">Ligase</keyword>
<keyword id="KW-0460">Magnesium</keyword>
<keyword id="KW-0479">Metal-binding</keyword>
<keyword id="KW-0547">Nucleotide-binding</keyword>
<comment type="function">
    <text evidence="1">Catalyzes a mechanistically unusual reaction, the ATP-dependent insertion of CO2 between the N7 and N8 nitrogen atoms of 7,8-diaminopelargonic acid (DAPA, also called 7,8-diammoniononanoate) to form a ureido ring.</text>
</comment>
<comment type="catalytic activity">
    <reaction evidence="1">
        <text>(7R,8S)-7,8-diammoniononanoate + CO2 + ATP = (4R,5S)-dethiobiotin + ADP + phosphate + 3 H(+)</text>
        <dbReference type="Rhea" id="RHEA:15805"/>
        <dbReference type="ChEBI" id="CHEBI:15378"/>
        <dbReference type="ChEBI" id="CHEBI:16526"/>
        <dbReference type="ChEBI" id="CHEBI:30616"/>
        <dbReference type="ChEBI" id="CHEBI:43474"/>
        <dbReference type="ChEBI" id="CHEBI:149469"/>
        <dbReference type="ChEBI" id="CHEBI:149473"/>
        <dbReference type="ChEBI" id="CHEBI:456216"/>
        <dbReference type="EC" id="6.3.3.3"/>
    </reaction>
</comment>
<comment type="cofactor">
    <cofactor evidence="1">
        <name>Mg(2+)</name>
        <dbReference type="ChEBI" id="CHEBI:18420"/>
    </cofactor>
</comment>
<comment type="pathway">
    <text evidence="1">Cofactor biosynthesis; biotin biosynthesis; biotin from 7,8-diaminononanoate: step 1/2.</text>
</comment>
<comment type="subunit">
    <text evidence="1">Homodimer.</text>
</comment>
<comment type="subcellular location">
    <subcellularLocation>
        <location evidence="1">Cytoplasm</location>
    </subcellularLocation>
</comment>
<comment type="similarity">
    <text evidence="1">Belongs to the dethiobiotin synthetase family.</text>
</comment>